<sequence length="501" mass="55493">MAKIDIDQIGALIQKQIEDYKADVRLESIGKVLSVADGIATVYGLSQAILGELVELPHDVKGLVFNLEQFHVGIILFGRTDLIKEGDNVRATKKIFEVPVGEDLLGRVVDPLGNPLDLKGTINADAYYPIERPAKDLMHRGFINEPLHTGIKVIDALVPIGKGQRELIIGDRQTGKSTIAIDTIINQRGKNVICVYVAIGQKDSTIANLVKLLQIKDALDYTVIINAGASKEATLLYIAPYTGSSIAEYFMEQGKDVLIIYDDLSKHAVAYRELSLLMKRPSGREAYPGDIFYLHSRLLERAGKLSKEHGGGSITALPIVETQAGDISAYIPTNIISITDGQLYLEQKLFYQGVRPAINAGLSVSRVGGSAQWKAMKQVAGTLRISLANFRELESFAQFGSDLDPSSKRRLDRGRKTVEILKQDVHELIDMPSQIVTFYALENGFMDDLNLKQIRSLMAEIEQGLSLNETGKKLRKELVEHKAIKDKALMELFIDHVRRFI</sequence>
<reference key="1">
    <citation type="journal article" date="2011" name="J. Bacteriol.">
        <title>Complete genome and proteome of Acholeplasma laidlawii.</title>
        <authorList>
            <person name="Lazarev V.N."/>
            <person name="Levitskii S.A."/>
            <person name="Basovskii Y.I."/>
            <person name="Chukin M.M."/>
            <person name="Akopian T.A."/>
            <person name="Vereshchagin V.V."/>
            <person name="Kostrjukova E.S."/>
            <person name="Kovaleva G.Y."/>
            <person name="Kazanov M.D."/>
            <person name="Malko D.B."/>
            <person name="Vitreschak A.G."/>
            <person name="Sernova N.V."/>
            <person name="Gelfand M.S."/>
            <person name="Demina I.A."/>
            <person name="Serebryakova M.V."/>
            <person name="Galyamina M.A."/>
            <person name="Vtyurin N.N."/>
            <person name="Rogov S.I."/>
            <person name="Alexeev D.G."/>
            <person name="Ladygina V.G."/>
            <person name="Govorun V.M."/>
        </authorList>
    </citation>
    <scope>NUCLEOTIDE SEQUENCE [LARGE SCALE GENOMIC DNA]</scope>
    <source>
        <strain>PG-8A</strain>
    </source>
</reference>
<evidence type="ECO:0000255" key="1">
    <source>
        <dbReference type="HAMAP-Rule" id="MF_01346"/>
    </source>
</evidence>
<name>ATPA_ACHLI</name>
<feature type="chain" id="PRO_0000339011" description="ATP synthase subunit alpha">
    <location>
        <begin position="1"/>
        <end position="501"/>
    </location>
</feature>
<feature type="binding site" evidence="1">
    <location>
        <begin position="170"/>
        <end position="177"/>
    </location>
    <ligand>
        <name>ATP</name>
        <dbReference type="ChEBI" id="CHEBI:30616"/>
    </ligand>
</feature>
<feature type="site" description="Required for activity" evidence="1">
    <location>
        <position position="363"/>
    </location>
</feature>
<accession>A9NGW4</accession>
<organism>
    <name type="scientific">Acholeplasma laidlawii (strain PG-8A)</name>
    <dbReference type="NCBI Taxonomy" id="441768"/>
    <lineage>
        <taxon>Bacteria</taxon>
        <taxon>Bacillati</taxon>
        <taxon>Mycoplasmatota</taxon>
        <taxon>Mollicutes</taxon>
        <taxon>Acholeplasmatales</taxon>
        <taxon>Acholeplasmataceae</taxon>
        <taxon>Acholeplasma</taxon>
    </lineage>
</organism>
<keyword id="KW-0066">ATP synthesis</keyword>
<keyword id="KW-0067">ATP-binding</keyword>
<keyword id="KW-1003">Cell membrane</keyword>
<keyword id="KW-0139">CF(1)</keyword>
<keyword id="KW-0375">Hydrogen ion transport</keyword>
<keyword id="KW-0406">Ion transport</keyword>
<keyword id="KW-0472">Membrane</keyword>
<keyword id="KW-0547">Nucleotide-binding</keyword>
<keyword id="KW-1185">Reference proteome</keyword>
<keyword id="KW-1278">Translocase</keyword>
<keyword id="KW-0813">Transport</keyword>
<protein>
    <recommendedName>
        <fullName evidence="1">ATP synthase subunit alpha</fullName>
        <ecNumber evidence="1">7.1.2.2</ecNumber>
    </recommendedName>
    <alternativeName>
        <fullName evidence="1">ATP synthase F1 sector subunit alpha</fullName>
    </alternativeName>
    <alternativeName>
        <fullName evidence="1">F-ATPase subunit alpha</fullName>
    </alternativeName>
</protein>
<proteinExistence type="inferred from homology"/>
<gene>
    <name evidence="1" type="primary">atpA</name>
    <name type="ordered locus">ACL_0984</name>
</gene>
<dbReference type="EC" id="7.1.2.2" evidence="1"/>
<dbReference type="EMBL" id="CP000896">
    <property type="protein sequence ID" value="ABX81594.1"/>
    <property type="molecule type" value="Genomic_DNA"/>
</dbReference>
<dbReference type="RefSeq" id="WP_012242925.1">
    <property type="nucleotide sequence ID" value="NC_010163.1"/>
</dbReference>
<dbReference type="SMR" id="A9NGW4"/>
<dbReference type="STRING" id="441768.ACL_0984"/>
<dbReference type="GeneID" id="41339130"/>
<dbReference type="KEGG" id="acl:ACL_0984"/>
<dbReference type="eggNOG" id="COG0056">
    <property type="taxonomic scope" value="Bacteria"/>
</dbReference>
<dbReference type="HOGENOM" id="CLU_010091_2_1_14"/>
<dbReference type="OrthoDB" id="9803053at2"/>
<dbReference type="Proteomes" id="UP000008558">
    <property type="component" value="Chromosome"/>
</dbReference>
<dbReference type="GO" id="GO:0005886">
    <property type="term" value="C:plasma membrane"/>
    <property type="evidence" value="ECO:0007669"/>
    <property type="project" value="UniProtKB-SubCell"/>
</dbReference>
<dbReference type="GO" id="GO:0045259">
    <property type="term" value="C:proton-transporting ATP synthase complex"/>
    <property type="evidence" value="ECO:0007669"/>
    <property type="project" value="UniProtKB-KW"/>
</dbReference>
<dbReference type="GO" id="GO:0043531">
    <property type="term" value="F:ADP binding"/>
    <property type="evidence" value="ECO:0007669"/>
    <property type="project" value="TreeGrafter"/>
</dbReference>
<dbReference type="GO" id="GO:0005524">
    <property type="term" value="F:ATP binding"/>
    <property type="evidence" value="ECO:0007669"/>
    <property type="project" value="UniProtKB-UniRule"/>
</dbReference>
<dbReference type="GO" id="GO:0046933">
    <property type="term" value="F:proton-transporting ATP synthase activity, rotational mechanism"/>
    <property type="evidence" value="ECO:0007669"/>
    <property type="project" value="UniProtKB-UniRule"/>
</dbReference>
<dbReference type="CDD" id="cd18113">
    <property type="entry name" value="ATP-synt_F1_alpha_C"/>
    <property type="match status" value="1"/>
</dbReference>
<dbReference type="CDD" id="cd18116">
    <property type="entry name" value="ATP-synt_F1_alpha_N"/>
    <property type="match status" value="1"/>
</dbReference>
<dbReference type="CDD" id="cd01132">
    <property type="entry name" value="F1-ATPase_alpha_CD"/>
    <property type="match status" value="1"/>
</dbReference>
<dbReference type="FunFam" id="3.40.50.300:FF:000002">
    <property type="entry name" value="ATP synthase subunit alpha"/>
    <property type="match status" value="1"/>
</dbReference>
<dbReference type="Gene3D" id="2.40.30.20">
    <property type="match status" value="1"/>
</dbReference>
<dbReference type="Gene3D" id="1.20.150.20">
    <property type="entry name" value="ATP synthase alpha/beta chain, C-terminal domain"/>
    <property type="match status" value="1"/>
</dbReference>
<dbReference type="Gene3D" id="3.40.50.300">
    <property type="entry name" value="P-loop containing nucleotide triphosphate hydrolases"/>
    <property type="match status" value="1"/>
</dbReference>
<dbReference type="HAMAP" id="MF_01346">
    <property type="entry name" value="ATP_synth_alpha_bact"/>
    <property type="match status" value="1"/>
</dbReference>
<dbReference type="InterPro" id="IPR023366">
    <property type="entry name" value="ATP_synth_asu-like_sf"/>
</dbReference>
<dbReference type="InterPro" id="IPR000793">
    <property type="entry name" value="ATP_synth_asu_C"/>
</dbReference>
<dbReference type="InterPro" id="IPR038376">
    <property type="entry name" value="ATP_synth_asu_C_sf"/>
</dbReference>
<dbReference type="InterPro" id="IPR033732">
    <property type="entry name" value="ATP_synth_F1_a_nt-bd_dom"/>
</dbReference>
<dbReference type="InterPro" id="IPR005294">
    <property type="entry name" value="ATP_synth_F1_asu"/>
</dbReference>
<dbReference type="InterPro" id="IPR020003">
    <property type="entry name" value="ATPase_a/bsu_AS"/>
</dbReference>
<dbReference type="InterPro" id="IPR004100">
    <property type="entry name" value="ATPase_F1/V1/A1_a/bsu_N"/>
</dbReference>
<dbReference type="InterPro" id="IPR036121">
    <property type="entry name" value="ATPase_F1/V1/A1_a/bsu_N_sf"/>
</dbReference>
<dbReference type="InterPro" id="IPR000194">
    <property type="entry name" value="ATPase_F1/V1/A1_a/bsu_nucl-bd"/>
</dbReference>
<dbReference type="InterPro" id="IPR027417">
    <property type="entry name" value="P-loop_NTPase"/>
</dbReference>
<dbReference type="NCBIfam" id="TIGR00962">
    <property type="entry name" value="atpA"/>
    <property type="match status" value="1"/>
</dbReference>
<dbReference type="NCBIfam" id="NF009884">
    <property type="entry name" value="PRK13343.1"/>
    <property type="match status" value="1"/>
</dbReference>
<dbReference type="PANTHER" id="PTHR48082">
    <property type="entry name" value="ATP SYNTHASE SUBUNIT ALPHA, MITOCHONDRIAL"/>
    <property type="match status" value="1"/>
</dbReference>
<dbReference type="PANTHER" id="PTHR48082:SF2">
    <property type="entry name" value="ATP SYNTHASE SUBUNIT ALPHA, MITOCHONDRIAL"/>
    <property type="match status" value="1"/>
</dbReference>
<dbReference type="Pfam" id="PF00006">
    <property type="entry name" value="ATP-synt_ab"/>
    <property type="match status" value="1"/>
</dbReference>
<dbReference type="Pfam" id="PF00306">
    <property type="entry name" value="ATP-synt_ab_C"/>
    <property type="match status" value="1"/>
</dbReference>
<dbReference type="Pfam" id="PF02874">
    <property type="entry name" value="ATP-synt_ab_N"/>
    <property type="match status" value="1"/>
</dbReference>
<dbReference type="SUPFAM" id="SSF47917">
    <property type="entry name" value="C-terminal domain of alpha and beta subunits of F1 ATP synthase"/>
    <property type="match status" value="1"/>
</dbReference>
<dbReference type="SUPFAM" id="SSF50615">
    <property type="entry name" value="N-terminal domain of alpha and beta subunits of F1 ATP synthase"/>
    <property type="match status" value="1"/>
</dbReference>
<dbReference type="SUPFAM" id="SSF52540">
    <property type="entry name" value="P-loop containing nucleoside triphosphate hydrolases"/>
    <property type="match status" value="1"/>
</dbReference>
<dbReference type="PROSITE" id="PS00152">
    <property type="entry name" value="ATPASE_ALPHA_BETA"/>
    <property type="match status" value="1"/>
</dbReference>
<comment type="function">
    <text evidence="1">Produces ATP from ADP in the presence of a proton gradient across the membrane. The alpha chain is a regulatory subunit.</text>
</comment>
<comment type="catalytic activity">
    <reaction evidence="1">
        <text>ATP + H2O + 4 H(+)(in) = ADP + phosphate + 5 H(+)(out)</text>
        <dbReference type="Rhea" id="RHEA:57720"/>
        <dbReference type="ChEBI" id="CHEBI:15377"/>
        <dbReference type="ChEBI" id="CHEBI:15378"/>
        <dbReference type="ChEBI" id="CHEBI:30616"/>
        <dbReference type="ChEBI" id="CHEBI:43474"/>
        <dbReference type="ChEBI" id="CHEBI:456216"/>
        <dbReference type="EC" id="7.1.2.2"/>
    </reaction>
</comment>
<comment type="subunit">
    <text evidence="1">F-type ATPases have 2 components, CF(1) - the catalytic core - and CF(0) - the membrane proton channel. CF(1) has five subunits: alpha(3), beta(3), gamma(1), delta(1), epsilon(1). CF(0) has three main subunits: a(1), b(2) and c(9-12). The alpha and beta chains form an alternating ring which encloses part of the gamma chain. CF(1) is attached to CF(0) by a central stalk formed by the gamma and epsilon chains, while a peripheral stalk is formed by the delta and b chains.</text>
</comment>
<comment type="subcellular location">
    <subcellularLocation>
        <location evidence="1">Cell membrane</location>
        <topology evidence="1">Peripheral membrane protein</topology>
    </subcellularLocation>
</comment>
<comment type="similarity">
    <text evidence="1">Belongs to the ATPase alpha/beta chains family.</text>
</comment>